<organism>
    <name type="scientific">Sinorhizobium fredii (strain NBRC 101917 / NGR234)</name>
    <dbReference type="NCBI Taxonomy" id="394"/>
    <lineage>
        <taxon>Bacteria</taxon>
        <taxon>Pseudomonadati</taxon>
        <taxon>Pseudomonadota</taxon>
        <taxon>Alphaproteobacteria</taxon>
        <taxon>Hyphomicrobiales</taxon>
        <taxon>Rhizobiaceae</taxon>
        <taxon>Sinorhizobium/Ensifer group</taxon>
        <taxon>Sinorhizobium</taxon>
    </lineage>
</organism>
<keyword id="KW-0238">DNA-binding</keyword>
<keyword id="KW-0240">DNA-directed RNA polymerase</keyword>
<keyword id="KW-0548">Nucleotidyltransferase</keyword>
<keyword id="KW-1185">Reference proteome</keyword>
<keyword id="KW-0731">Sigma factor</keyword>
<keyword id="KW-0804">Transcription</keyword>
<keyword id="KW-0805">Transcription regulation</keyword>
<keyword id="KW-0808">Transferase</keyword>
<sequence length="519" mass="57196">MALSASLHLRQSQSLVMTPQLMQSIQLLQMTHLELGQFIAQEVEKNPLLEFQSADEAGFGSDRPERDETGLTAEAGGAEESVDHGDLYDSATTSPGERLSTELDADFANVFQDDTAPQRADAPELLGQWKSMPGAGGSNDGEGYDLDDFVAGRKTLRETLIEQVAFAFAAPADRLIAQHLIDQLDEAGYLHAEIAETAARLGASAADVTRVLLVLQQFDPPGVFARTLSECLAIQLRLRNRLDPAMEALVANLELLARRDFASLKKICGVDEEDLIEMLAEIRKLDPKPGTSFETSVTEAIIPDVVVRSAPDGGWLVELNPDALPRVLVNHDYFAEISRHSQKNSAEQAFLSECMQNANWLTRSLDQRARTILKVASEIVRQQDAFLVHGVDHLRPLNLRIVADAIKMHESTVSRVTSNKYILTPRGLFELKYFFTVSIGSAENGDAHSAESVRHRIRTMISQESADAVLSDDDIVDILKRAGVDIARRTVAKYREAMNIPSSVQRRREKRALAKAAGF</sequence>
<reference key="1">
    <citation type="journal article" date="1990" name="J. Bacteriol.">
        <title>Sequence and analysis of the rpoN sigma factor gene of rhizobium sp. strain NGR234, a primary coregulator of symbiosis.</title>
        <authorList>
            <person name="van Slooten J.C."/>
            <person name="Cervantes E."/>
            <person name="Broughton W.J."/>
            <person name="Wong C.H."/>
            <person name="Stanley J."/>
        </authorList>
    </citation>
    <scope>NUCLEOTIDE SEQUENCE [GENOMIC DNA]</scope>
</reference>
<reference key="2">
    <citation type="journal article" date="2009" name="Appl. Environ. Microbiol.">
        <title>Rhizobium sp. strain NGR234 possesses a remarkable number of secretion systems.</title>
        <authorList>
            <person name="Schmeisser C."/>
            <person name="Liesegang H."/>
            <person name="Krysciak D."/>
            <person name="Bakkou N."/>
            <person name="Le Quere A."/>
            <person name="Wollherr A."/>
            <person name="Heinemeyer I."/>
            <person name="Morgenstern B."/>
            <person name="Pommerening-Roeser A."/>
            <person name="Flores M."/>
            <person name="Palacios R."/>
            <person name="Brenner S."/>
            <person name="Gottschalk G."/>
            <person name="Schmitz R.A."/>
            <person name="Broughton W.J."/>
            <person name="Perret X."/>
            <person name="Strittmatter A.W."/>
            <person name="Streit W.R."/>
        </authorList>
    </citation>
    <scope>NUCLEOTIDE SEQUENCE [LARGE SCALE GENOMIC DNA]</scope>
    <source>
        <strain>NBRC 101917 / NGR234</strain>
    </source>
</reference>
<gene>
    <name type="primary">rpoN</name>
    <name type="synonym">ntrA</name>
    <name type="ordered locus">NGR_c00170</name>
</gene>
<evidence type="ECO:0000255" key="1"/>
<evidence type="ECO:0000256" key="2">
    <source>
        <dbReference type="SAM" id="MobiDB-lite"/>
    </source>
</evidence>
<evidence type="ECO:0000305" key="3"/>
<name>RP54_SINFN</name>
<protein>
    <recommendedName>
        <fullName>RNA polymerase sigma-54 factor</fullName>
    </recommendedName>
</protein>
<comment type="function">
    <text>Sigma factors are initiation factors that promote the attachment of RNA polymerase to specific initiation sites and are then released. This sigma factor is responsible for the expression of the nitrogen fixation genes (nif operon), glnA and dctA for dicarboxylate transport. The open complex (sigma-54 and core RNA polymerase) serves as the receptor for receipt of the melting signal from the remotely bound activator proteins NifA, NtrC, or DctD for the expression of the regulated proteins.</text>
</comment>
<comment type="similarity">
    <text evidence="3">Belongs to the sigma-54 factor family.</text>
</comment>
<feature type="chain" id="PRO_0000205540" description="RNA polymerase sigma-54 factor">
    <location>
        <begin position="1"/>
        <end position="519"/>
    </location>
</feature>
<feature type="DNA-binding region" description="H-T-H motif" evidence="1">
    <location>
        <begin position="396"/>
        <end position="415"/>
    </location>
</feature>
<feature type="region of interest" description="Disordered" evidence="2">
    <location>
        <begin position="74"/>
        <end position="96"/>
    </location>
</feature>
<feature type="short sequence motif" description="RPON box">
    <location>
        <begin position="487"/>
        <end position="495"/>
    </location>
</feature>
<feature type="sequence conflict" description="In Ref. 1; AAA26361." evidence="3" ref="1">
    <original>FQS</original>
    <variation>VPI</variation>
    <location>
        <begin position="51"/>
        <end position="53"/>
    </location>
</feature>
<feature type="sequence conflict" description="In Ref. 1; AAA26361." evidence="3" ref="1">
    <original>GFGSDRPERDETGL</original>
    <variation>VSVRIGPSVMRHV</variation>
    <location>
        <begin position="58"/>
        <end position="71"/>
    </location>
</feature>
<feature type="sequence conflict" description="In Ref. 1; AAA26361." evidence="3" ref="1">
    <original>ST</original>
    <variation>RS</variation>
    <location>
        <begin position="100"/>
        <end position="101"/>
    </location>
</feature>
<feature type="sequence conflict" description="In Ref. 1; AAA26361." evidence="3" ref="1">
    <location>
        <position position="120"/>
    </location>
</feature>
<feature type="sequence conflict" description="In Ref. 1; AAA26361." evidence="3" ref="1">
    <original>FVAGRKT</original>
    <variation>SSPVGK</variation>
    <location>
        <begin position="149"/>
        <end position="155"/>
    </location>
</feature>
<feature type="sequence conflict" description="In Ref. 1; AAA26361." evidence="3" ref="1">
    <original>P</original>
    <variation>A</variation>
    <location>
        <position position="171"/>
    </location>
</feature>
<feature type="sequence conflict" description="In Ref. 1; AAA26361." evidence="3" ref="1">
    <original>G</original>
    <variation>A</variation>
    <location>
        <position position="202"/>
    </location>
</feature>
<feature type="sequence conflict" description="In Ref. 1; AAA26361." evidence="3" ref="1">
    <original>L</original>
    <variation>V</variation>
    <location>
        <position position="213"/>
    </location>
</feature>
<feature type="sequence conflict" description="In Ref. 1; AAA26361." evidence="3" ref="1">
    <original>R</original>
    <variation>G</variation>
    <location>
        <position position="241"/>
    </location>
</feature>
<feature type="sequence conflict" description="In Ref. 1; AAA26361." evidence="3" ref="1">
    <original>A</original>
    <variation>G</variation>
    <location>
        <position position="257"/>
    </location>
</feature>
<feature type="sequence conflict" description="In Ref. 1; AAA26361." evidence="3" ref="1">
    <original>A</original>
    <variation>R</variation>
    <location>
        <position position="310"/>
    </location>
</feature>
<feature type="sequence conflict" description="In Ref. 1; AAA26361." evidence="3" ref="1">
    <original>I</original>
    <variation>R</variation>
    <location>
        <position position="422"/>
    </location>
</feature>
<feature type="sequence conflict" description="In Ref. 1; AAA26361." evidence="3" ref="1">
    <original>AKAAGF</original>
    <variation>PRQPASDCGFFAAAN</variation>
    <location>
        <begin position="514"/>
        <end position="519"/>
    </location>
</feature>
<dbReference type="EMBL" id="M58481">
    <property type="protein sequence ID" value="AAA26361.1"/>
    <property type="molecule type" value="Genomic_DNA"/>
</dbReference>
<dbReference type="EMBL" id="CP001389">
    <property type="protein sequence ID" value="ACP23821.1"/>
    <property type="molecule type" value="Genomic_DNA"/>
</dbReference>
<dbReference type="PIR" id="A36130">
    <property type="entry name" value="A36130"/>
</dbReference>
<dbReference type="RefSeq" id="WP_012706606.1">
    <property type="nucleotide sequence ID" value="NC_012587.1"/>
</dbReference>
<dbReference type="RefSeq" id="YP_002824574.1">
    <property type="nucleotide sequence ID" value="NC_012587.1"/>
</dbReference>
<dbReference type="SMR" id="P22881"/>
<dbReference type="STRING" id="394.NGR_c00170"/>
<dbReference type="KEGG" id="rhi:NGR_c00170"/>
<dbReference type="PATRIC" id="fig|394.7.peg.2807"/>
<dbReference type="eggNOG" id="COG1508">
    <property type="taxonomic scope" value="Bacteria"/>
</dbReference>
<dbReference type="HOGENOM" id="CLU_020569_0_0_5"/>
<dbReference type="OrthoDB" id="9814402at2"/>
<dbReference type="Proteomes" id="UP000001054">
    <property type="component" value="Chromosome"/>
</dbReference>
<dbReference type="GO" id="GO:0000428">
    <property type="term" value="C:DNA-directed RNA polymerase complex"/>
    <property type="evidence" value="ECO:0007669"/>
    <property type="project" value="UniProtKB-KW"/>
</dbReference>
<dbReference type="GO" id="GO:0003677">
    <property type="term" value="F:DNA binding"/>
    <property type="evidence" value="ECO:0007669"/>
    <property type="project" value="UniProtKB-KW"/>
</dbReference>
<dbReference type="GO" id="GO:0001216">
    <property type="term" value="F:DNA-binding transcription activator activity"/>
    <property type="evidence" value="ECO:0007669"/>
    <property type="project" value="InterPro"/>
</dbReference>
<dbReference type="GO" id="GO:0016779">
    <property type="term" value="F:nucleotidyltransferase activity"/>
    <property type="evidence" value="ECO:0007669"/>
    <property type="project" value="UniProtKB-KW"/>
</dbReference>
<dbReference type="GO" id="GO:0016987">
    <property type="term" value="F:sigma factor activity"/>
    <property type="evidence" value="ECO:0007669"/>
    <property type="project" value="UniProtKB-KW"/>
</dbReference>
<dbReference type="GO" id="GO:0006352">
    <property type="term" value="P:DNA-templated transcription initiation"/>
    <property type="evidence" value="ECO:0007669"/>
    <property type="project" value="InterPro"/>
</dbReference>
<dbReference type="Gene3D" id="1.10.10.60">
    <property type="entry name" value="Homeodomain-like"/>
    <property type="match status" value="1"/>
</dbReference>
<dbReference type="Gene3D" id="1.10.10.1330">
    <property type="entry name" value="RNA polymerase sigma-54 factor, core-binding domain"/>
    <property type="match status" value="1"/>
</dbReference>
<dbReference type="InterPro" id="IPR000394">
    <property type="entry name" value="RNA_pol_sigma_54"/>
</dbReference>
<dbReference type="InterPro" id="IPR007046">
    <property type="entry name" value="RNA_pol_sigma_54_core-bd"/>
</dbReference>
<dbReference type="InterPro" id="IPR007634">
    <property type="entry name" value="RNA_pol_sigma_54_DNA-bd"/>
</dbReference>
<dbReference type="InterPro" id="IPR038709">
    <property type="entry name" value="RpoN_core-bd_sf"/>
</dbReference>
<dbReference type="NCBIfam" id="NF004596">
    <property type="entry name" value="PRK05932.1-3"/>
    <property type="match status" value="1"/>
</dbReference>
<dbReference type="NCBIfam" id="NF009118">
    <property type="entry name" value="PRK12469.1"/>
    <property type="match status" value="1"/>
</dbReference>
<dbReference type="NCBIfam" id="TIGR02395">
    <property type="entry name" value="rpoN_sigma"/>
    <property type="match status" value="1"/>
</dbReference>
<dbReference type="PANTHER" id="PTHR32248">
    <property type="entry name" value="RNA POLYMERASE SIGMA-54 FACTOR"/>
    <property type="match status" value="1"/>
</dbReference>
<dbReference type="PANTHER" id="PTHR32248:SF4">
    <property type="entry name" value="RNA POLYMERASE SIGMA-54 FACTOR"/>
    <property type="match status" value="1"/>
</dbReference>
<dbReference type="Pfam" id="PF00309">
    <property type="entry name" value="Sigma54_AID"/>
    <property type="match status" value="1"/>
</dbReference>
<dbReference type="Pfam" id="PF04963">
    <property type="entry name" value="Sigma54_CBD"/>
    <property type="match status" value="1"/>
</dbReference>
<dbReference type="Pfam" id="PF04552">
    <property type="entry name" value="Sigma54_DBD"/>
    <property type="match status" value="1"/>
</dbReference>
<dbReference type="PIRSF" id="PIRSF000774">
    <property type="entry name" value="RpoN"/>
    <property type="match status" value="1"/>
</dbReference>
<dbReference type="PRINTS" id="PR00045">
    <property type="entry name" value="SIGMA54FCT"/>
</dbReference>
<dbReference type="PROSITE" id="PS00717">
    <property type="entry name" value="SIGMA54_1"/>
    <property type="match status" value="1"/>
</dbReference>
<dbReference type="PROSITE" id="PS00718">
    <property type="entry name" value="SIGMA54_2"/>
    <property type="match status" value="1"/>
</dbReference>
<dbReference type="PROSITE" id="PS50044">
    <property type="entry name" value="SIGMA54_3"/>
    <property type="match status" value="1"/>
</dbReference>
<proteinExistence type="inferred from homology"/>
<accession>P22881</accession>
<accession>C3MEJ8</accession>